<dbReference type="EMBL" id="AC079131">
    <property type="protein sequence ID" value="AAG50768.1"/>
    <property type="status" value="ALT_SEQ"/>
    <property type="molecule type" value="Genomic_DNA"/>
</dbReference>
<dbReference type="EMBL" id="CP002684">
    <property type="protein sequence ID" value="AEE33504.2"/>
    <property type="molecule type" value="Genomic_DNA"/>
</dbReference>
<dbReference type="EMBL" id="AB638773">
    <property type="protein sequence ID" value="BAL48821.1"/>
    <property type="molecule type" value="mRNA"/>
</dbReference>
<dbReference type="PIR" id="H96614">
    <property type="entry name" value="H96614"/>
</dbReference>
<dbReference type="RefSeq" id="NP_176112.3">
    <molecule id="F4I9R6-1"/>
    <property type="nucleotide sequence ID" value="NM_104597.3"/>
</dbReference>
<dbReference type="SMR" id="F4I9R6"/>
<dbReference type="FunCoup" id="F4I9R6">
    <property type="interactions" value="9"/>
</dbReference>
<dbReference type="STRING" id="3702.F4I9R6"/>
<dbReference type="iPTMnet" id="F4I9R6"/>
<dbReference type="PaxDb" id="3702-AT1G58160.1"/>
<dbReference type="EnsemblPlants" id="AT1G58160.1">
    <molecule id="F4I9R6-1"/>
    <property type="protein sequence ID" value="AT1G58160.1"/>
    <property type="gene ID" value="AT1G58160"/>
</dbReference>
<dbReference type="GeneID" id="842183"/>
<dbReference type="Gramene" id="AT1G58160.1">
    <molecule id="F4I9R6-1"/>
    <property type="protein sequence ID" value="AT1G58160.1"/>
    <property type="gene ID" value="AT1G58160"/>
</dbReference>
<dbReference type="KEGG" id="ath:AT1G58160"/>
<dbReference type="Araport" id="AT1G58160"/>
<dbReference type="TAIR" id="AT1G58160">
    <property type="gene designation" value="JAX1"/>
</dbReference>
<dbReference type="HOGENOM" id="CLU_2052851_0_0_1"/>
<dbReference type="InParanoid" id="F4I9R6"/>
<dbReference type="OMA" id="HTCDEHI"/>
<dbReference type="PRO" id="PR:F4I9R6"/>
<dbReference type="Proteomes" id="UP000006548">
    <property type="component" value="Chromosome 1"/>
</dbReference>
<dbReference type="ExpressionAtlas" id="F4I9R6">
    <property type="expression patterns" value="baseline and differential"/>
</dbReference>
<dbReference type="GO" id="GO:0030246">
    <property type="term" value="F:carbohydrate binding"/>
    <property type="evidence" value="ECO:0007669"/>
    <property type="project" value="UniProtKB-KW"/>
</dbReference>
<dbReference type="GO" id="GO:0051607">
    <property type="term" value="P:defense response to virus"/>
    <property type="evidence" value="ECO:0000315"/>
    <property type="project" value="TAIR"/>
</dbReference>
<dbReference type="CDD" id="cd09612">
    <property type="entry name" value="Jacalin"/>
    <property type="match status" value="1"/>
</dbReference>
<dbReference type="Gene3D" id="2.100.10.30">
    <property type="entry name" value="Jacalin-like lectin domain"/>
    <property type="match status" value="1"/>
</dbReference>
<dbReference type="InterPro" id="IPR001229">
    <property type="entry name" value="Jacalin-like_lectin_dom"/>
</dbReference>
<dbReference type="InterPro" id="IPR033734">
    <property type="entry name" value="Jacalin-like_lectin_dom_plant"/>
</dbReference>
<dbReference type="InterPro" id="IPR036404">
    <property type="entry name" value="Jacalin-like_lectin_dom_sf"/>
</dbReference>
<dbReference type="PANTHER" id="PTHR47293:SF21">
    <property type="entry name" value="GENOME ASSEMBLY, CHROMOSOME: A06"/>
    <property type="match status" value="1"/>
</dbReference>
<dbReference type="PANTHER" id="PTHR47293">
    <property type="entry name" value="JACALIN-RELATED LECTIN 3"/>
    <property type="match status" value="1"/>
</dbReference>
<dbReference type="Pfam" id="PF01419">
    <property type="entry name" value="Jacalin"/>
    <property type="match status" value="1"/>
</dbReference>
<dbReference type="SMART" id="SM00915">
    <property type="entry name" value="Jacalin"/>
    <property type="match status" value="1"/>
</dbReference>
<dbReference type="SUPFAM" id="SSF51101">
    <property type="entry name" value="Mannose-binding lectins"/>
    <property type="match status" value="1"/>
</dbReference>
<dbReference type="PROSITE" id="PS51752">
    <property type="entry name" value="JACALIN_LECTIN"/>
    <property type="match status" value="1"/>
</dbReference>
<evidence type="ECO:0000255" key="1">
    <source>
        <dbReference type="PROSITE-ProRule" id="PRU01088"/>
    </source>
</evidence>
<evidence type="ECO:0000269" key="2">
    <source>
    </source>
</evidence>
<evidence type="ECO:0000303" key="3">
    <source>
    </source>
</evidence>
<evidence type="ECO:0000305" key="4"/>
<evidence type="ECO:0000305" key="5">
    <source>
    </source>
</evidence>
<proteinExistence type="evidence at transcript level"/>
<protein>
    <recommendedName>
        <fullName>Jacalin-related lectin 15</fullName>
    </recommendedName>
    <alternativeName>
        <fullName>Protein JACALIN-TYPE LECTIN REQUIRED FOR POTEXVIRUS RESISTANCE1</fullName>
    </alternativeName>
</protein>
<feature type="chain" id="PRO_0000430383" description="Jacalin-related lectin 15">
    <location>
        <begin position="1"/>
        <end position="131"/>
    </location>
</feature>
<feature type="domain" description="Jacalin-type lectin" evidence="1">
    <location>
        <begin position="1"/>
        <end position="126"/>
    </location>
</feature>
<feature type="splice variant" id="VSP_056715" description="In isoform 2." evidence="3">
    <original>RIASIKFDYVKNGQPK</original>
    <variation>GNGGKIWDDGVHEGVS</variation>
    <location>
        <begin position="21"/>
        <end position="36"/>
    </location>
</feature>
<feature type="splice variant" id="VSP_056716" description="In isoform 2." evidence="3">
    <location>
        <begin position="37"/>
        <end position="131"/>
    </location>
</feature>
<gene>
    <name type="primary">JAL15</name>
    <name type="synonym">JAX1</name>
    <name type="ordered locus">At1g58160</name>
    <name type="ORF">T18I24.7</name>
</gene>
<organism>
    <name type="scientific">Arabidopsis thaliana</name>
    <name type="common">Mouse-ear cress</name>
    <dbReference type="NCBI Taxonomy" id="3702"/>
    <lineage>
        <taxon>Eukaryota</taxon>
        <taxon>Viridiplantae</taxon>
        <taxon>Streptophyta</taxon>
        <taxon>Embryophyta</taxon>
        <taxon>Tracheophyta</taxon>
        <taxon>Spermatophyta</taxon>
        <taxon>Magnoliopsida</taxon>
        <taxon>eudicotyledons</taxon>
        <taxon>Gunneridae</taxon>
        <taxon>Pentapetalae</taxon>
        <taxon>rosids</taxon>
        <taxon>malvids</taxon>
        <taxon>Brassicales</taxon>
        <taxon>Brassicaceae</taxon>
        <taxon>Camelineae</taxon>
        <taxon>Arabidopsis</taxon>
    </lineage>
</organism>
<keyword id="KW-0025">Alternative splicing</keyword>
<keyword id="KW-0430">Lectin</keyword>
<keyword id="KW-1185">Reference proteome</keyword>
<comment type="alternative products">
    <event type="alternative splicing"/>
    <isoform>
        <id>F4I9R6-1</id>
        <name>1</name>
        <sequence type="displayed"/>
    </isoform>
    <isoform>
        <id>F4I9R6-2</id>
        <name>2</name>
        <sequence type="described" ref="VSP_056715 VSP_056716"/>
    </isoform>
</comment>
<comment type="tissue specificity">
    <text evidence="2">Expressed in the vascular and surrounding tissues in cotyledons. Detected in root apical meristems.</text>
</comment>
<comment type="similarity">
    <text evidence="1 4">Belongs to the jacalin lectin family.</text>
</comment>
<comment type="caution">
    <text evidence="5">The plantago asiatica mosaic virus (PlAMV)-resistant ecotypes (cv. Bay-0, cv. Ga-0, cv. Dra-2, cv. Eil-0 and cv. Is-1) encoded a full-length 157-amino-acid proteins (AC H3JUC3), whereas in the susceptible ecotypes (cv. Col-0 and cv. Ler), the presence of a stop codon in the first exon results in the production of a N-terminal 36-amino-acid fragments (PubMed:22307853). However, the identification of a small peptide spanning an alternative splice junction leads to the proposal of an alternative gene model in cv. Columbia.</text>
</comment>
<comment type="sequence caution" evidence="4">
    <conflict type="erroneous gene model prediction">
        <sequence resource="EMBL-CDS" id="AAG50768"/>
    </conflict>
</comment>
<accession>F4I9R6</accession>
<accession>H3JUC0</accession>
<accession>Q9C6R3</accession>
<name>JA15S_ARATH</name>
<reference key="1">
    <citation type="journal article" date="2000" name="Nature">
        <title>Sequence and analysis of chromosome 1 of the plant Arabidopsis thaliana.</title>
        <authorList>
            <person name="Theologis A."/>
            <person name="Ecker J.R."/>
            <person name="Palm C.J."/>
            <person name="Federspiel N.A."/>
            <person name="Kaul S."/>
            <person name="White O."/>
            <person name="Alonso J."/>
            <person name="Altafi H."/>
            <person name="Araujo R."/>
            <person name="Bowman C.L."/>
            <person name="Brooks S.Y."/>
            <person name="Buehler E."/>
            <person name="Chan A."/>
            <person name="Chao Q."/>
            <person name="Chen H."/>
            <person name="Cheuk R.F."/>
            <person name="Chin C.W."/>
            <person name="Chung M.K."/>
            <person name="Conn L."/>
            <person name="Conway A.B."/>
            <person name="Conway A.R."/>
            <person name="Creasy T.H."/>
            <person name="Dewar K."/>
            <person name="Dunn P."/>
            <person name="Etgu P."/>
            <person name="Feldblyum T.V."/>
            <person name="Feng J.-D."/>
            <person name="Fong B."/>
            <person name="Fujii C.Y."/>
            <person name="Gill J.E."/>
            <person name="Goldsmith A.D."/>
            <person name="Haas B."/>
            <person name="Hansen N.F."/>
            <person name="Hughes B."/>
            <person name="Huizar L."/>
            <person name="Hunter J.L."/>
            <person name="Jenkins J."/>
            <person name="Johnson-Hopson C."/>
            <person name="Khan S."/>
            <person name="Khaykin E."/>
            <person name="Kim C.J."/>
            <person name="Koo H.L."/>
            <person name="Kremenetskaia I."/>
            <person name="Kurtz D.B."/>
            <person name="Kwan A."/>
            <person name="Lam B."/>
            <person name="Langin-Hooper S."/>
            <person name="Lee A."/>
            <person name="Lee J.M."/>
            <person name="Lenz C.A."/>
            <person name="Li J.H."/>
            <person name="Li Y.-P."/>
            <person name="Lin X."/>
            <person name="Liu S.X."/>
            <person name="Liu Z.A."/>
            <person name="Luros J.S."/>
            <person name="Maiti R."/>
            <person name="Marziali A."/>
            <person name="Militscher J."/>
            <person name="Miranda M."/>
            <person name="Nguyen M."/>
            <person name="Nierman W.C."/>
            <person name="Osborne B.I."/>
            <person name="Pai G."/>
            <person name="Peterson J."/>
            <person name="Pham P.K."/>
            <person name="Rizzo M."/>
            <person name="Rooney T."/>
            <person name="Rowley D."/>
            <person name="Sakano H."/>
            <person name="Salzberg S.L."/>
            <person name="Schwartz J.R."/>
            <person name="Shinn P."/>
            <person name="Southwick A.M."/>
            <person name="Sun H."/>
            <person name="Tallon L.J."/>
            <person name="Tambunga G."/>
            <person name="Toriumi M.J."/>
            <person name="Town C.D."/>
            <person name="Utterback T."/>
            <person name="Van Aken S."/>
            <person name="Vaysberg M."/>
            <person name="Vysotskaia V.S."/>
            <person name="Walker M."/>
            <person name="Wu D."/>
            <person name="Yu G."/>
            <person name="Fraser C.M."/>
            <person name="Venter J.C."/>
            <person name="Davis R.W."/>
        </authorList>
    </citation>
    <scope>NUCLEOTIDE SEQUENCE [LARGE SCALE GENOMIC DNA]</scope>
    <source>
        <strain>cv. Columbia</strain>
    </source>
</reference>
<reference key="2">
    <citation type="journal article" date="2017" name="Plant J.">
        <title>Araport11: a complete reannotation of the Arabidopsis thaliana reference genome.</title>
        <authorList>
            <person name="Cheng C.Y."/>
            <person name="Krishnakumar V."/>
            <person name="Chan A.P."/>
            <person name="Thibaud-Nissen F."/>
            <person name="Schobel S."/>
            <person name="Town C.D."/>
        </authorList>
    </citation>
    <scope>GENOME REANNOTATION</scope>
    <source>
        <strain>cv. Columbia</strain>
    </source>
</reference>
<reference key="3">
    <citation type="journal article" date="2012" name="Plant Cell">
        <title>Lectin-mediated resistance impairs plant virus infection at the cellular level.</title>
        <authorList>
            <person name="Yamaji Y."/>
            <person name="Maejima K."/>
            <person name="Ozeki J."/>
            <person name="Komatsu K."/>
            <person name="Shiraishi T."/>
            <person name="Okano Y."/>
            <person name="Himeno M."/>
            <person name="Sugawara K."/>
            <person name="Neriya Y."/>
            <person name="Minato N."/>
            <person name="Miura C."/>
            <person name="Hashimoto M."/>
            <person name="Namba S."/>
        </authorList>
    </citation>
    <scope>NUCLEOTIDE SEQUENCE [MRNA] (ISOFORM 2)</scope>
    <scope>TISSUE SPECIFICITY</scope>
    <source>
        <strain>cv. Columbia</strain>
    </source>
</reference>
<reference key="4">
    <citation type="journal article" date="2008" name="Plant Cell Physiol.">
        <title>Antagonistic jacalin-related lectins regulate the size of ER body-type beta-glucosidase complexes in Arabidopsis thaliana.</title>
        <authorList>
            <person name="Nagano A.J."/>
            <person name="Fukao Y."/>
            <person name="Fujiwara M."/>
            <person name="Nishimura M."/>
            <person name="Hara-Nishimura I."/>
        </authorList>
    </citation>
    <scope>GENE FAMILY</scope>
    <scope>NOMENCLATURE</scope>
</reference>
<sequence>MSTPSGSNPLPMADKLEAKGRIASIKFDYVKNGQPKAGSTHGVSYHNFTEWFDLNHTCDEHILSVKCYYDDGEIQGLVIKTNIRTSAYMGYNIGTTFTLEVKGKKIVGFHGSFDKNLTSLGAYFAPLSPAK</sequence>